<feature type="initiator methionine" description="Removed" evidence="12 13">
    <location>
        <position position="1"/>
    </location>
</feature>
<feature type="chain" id="PRO_0000048523" description="High mobility group protein B1">
    <location>
        <begin position="2"/>
        <end position="215"/>
    </location>
</feature>
<feature type="DNA-binding region" description="HMG box 1" evidence="4">
    <location>
        <begin position="9"/>
        <end position="79"/>
    </location>
</feature>
<feature type="DNA-binding region" description="HMG box 2" evidence="4">
    <location>
        <begin position="95"/>
        <end position="163"/>
    </location>
</feature>
<feature type="region of interest" description="Sufficient for interaction with HAVCR2" evidence="2">
    <location>
        <begin position="2"/>
        <end position="97"/>
    </location>
</feature>
<feature type="region of interest" description="LPS binding (delipidated)" evidence="1">
    <location>
        <begin position="3"/>
        <end position="15"/>
    </location>
</feature>
<feature type="region of interest" description="Disordered" evidence="5">
    <location>
        <begin position="76"/>
        <end position="95"/>
    </location>
</feature>
<feature type="region of interest" description="LPS binding (Lipid A)" evidence="1">
    <location>
        <begin position="80"/>
        <end position="96"/>
    </location>
</feature>
<feature type="region of interest" description="Cytokine-stimulating activity" evidence="1">
    <location>
        <begin position="89"/>
        <end position="108"/>
    </location>
</feature>
<feature type="region of interest" description="Binding to AGER/RAGE" evidence="3">
    <location>
        <begin position="150"/>
        <end position="183"/>
    </location>
</feature>
<feature type="region of interest" description="Disordered" evidence="5">
    <location>
        <begin position="161"/>
        <end position="215"/>
    </location>
</feature>
<feature type="short sequence motif" description="Nuclear localization signal (NLS) 1" evidence="3">
    <location>
        <begin position="27"/>
        <end position="43"/>
    </location>
</feature>
<feature type="short sequence motif" description="Nuclear localization signal (NLS) 2" evidence="3">
    <location>
        <begin position="178"/>
        <end position="184"/>
    </location>
</feature>
<feature type="compositionally biased region" description="Basic and acidic residues" evidence="5">
    <location>
        <begin position="83"/>
        <end position="94"/>
    </location>
</feature>
<feature type="compositionally biased region" description="Basic and acidic residues" evidence="5">
    <location>
        <begin position="161"/>
        <end position="179"/>
    </location>
</feature>
<feature type="compositionally biased region" description="Acidic residues" evidence="5">
    <location>
        <begin position="187"/>
        <end position="215"/>
    </location>
</feature>
<feature type="binding site" evidence="9">
    <location>
        <begin position="2"/>
        <end position="10"/>
    </location>
    <ligand>
        <name>heparin</name>
        <dbReference type="ChEBI" id="CHEBI:28304"/>
    </ligand>
</feature>
<feature type="site" description="Cleavage; by thrombin:thrombomodulin" evidence="9">
    <location>
        <begin position="10"/>
        <end position="11"/>
    </location>
</feature>
<feature type="site" description="Cleavage; by CASP1" evidence="1">
    <location>
        <begin position="67"/>
        <end position="68"/>
    </location>
</feature>
<feature type="modified residue" description="N6-acetyllysine" evidence="6">
    <location>
        <position position="3"/>
    </location>
</feature>
<feature type="modified residue" description="N6-acetyllysine" evidence="6">
    <location>
        <position position="7"/>
    </location>
</feature>
<feature type="modified residue" description="N6-acetyllysine" evidence="6">
    <location>
        <position position="8"/>
    </location>
</feature>
<feature type="modified residue" description="N6-acetyllysine" evidence="6">
    <location>
        <position position="12"/>
    </location>
</feature>
<feature type="modified residue" description="Cysteine sulfonic acid (-SO3H); alternate" evidence="3">
    <location>
        <position position="23"/>
    </location>
</feature>
<feature type="modified residue" description="N6-acetyllysine" evidence="6">
    <location>
        <position position="28"/>
    </location>
</feature>
<feature type="modified residue" description="N6-acetyllysine" evidence="6">
    <location>
        <position position="29"/>
    </location>
</feature>
<feature type="modified residue" description="N6-acetyllysine" evidence="6">
    <location>
        <position position="30"/>
    </location>
</feature>
<feature type="modified residue" description="Phosphoserine" evidence="1">
    <location>
        <position position="35"/>
    </location>
</feature>
<feature type="modified residue" description="N6-acetyllysine" evidence="2">
    <location>
        <position position="43"/>
    </location>
</feature>
<feature type="modified residue" description="Cysteine sulfonic acid (-SO3H); alternate" evidence="3">
    <location>
        <position position="45"/>
    </location>
</feature>
<feature type="modified residue" description="N6-acetyllysine" evidence="2">
    <location>
        <position position="90"/>
    </location>
</feature>
<feature type="modified residue" description="Phosphoserine" evidence="1">
    <location>
        <position position="100"/>
    </location>
</feature>
<feature type="modified residue" description="Cysteine sulfonic acid (-SO3H)" evidence="3">
    <location>
        <position position="106"/>
    </location>
</feature>
<feature type="modified residue" description="N6-acetyllysine" evidence="6">
    <location>
        <position position="127"/>
    </location>
</feature>
<feature type="modified residue" description="N6-acetyllysine" evidence="6">
    <location>
        <position position="128"/>
    </location>
</feature>
<feature type="modified residue" description="N6-acetyllysine" evidence="2">
    <location>
        <position position="141"/>
    </location>
</feature>
<feature type="modified residue" description="N6-acetyllysine" evidence="6">
    <location>
        <position position="172"/>
    </location>
</feature>
<feature type="modified residue" description="N6-acetyllysine" evidence="6">
    <location>
        <position position="173"/>
    </location>
</feature>
<feature type="modified residue" description="N6-acetyllysine" evidence="6">
    <location>
        <position position="177"/>
    </location>
</feature>
<feature type="modified residue" description="N6-acetyllysine" evidence="6">
    <location>
        <position position="180"/>
    </location>
</feature>
<feature type="modified residue" description="ADP-ribosylserine" evidence="1">
    <location>
        <position position="181"/>
    </location>
</feature>
<feature type="modified residue" description="N6-acetyllysine" evidence="6">
    <location>
        <position position="182"/>
    </location>
</feature>
<feature type="modified residue" description="N6-acetyllysine" evidence="6">
    <location>
        <position position="183"/>
    </location>
</feature>
<feature type="modified residue" description="N6-acetyllysine" evidence="6">
    <location>
        <position position="184"/>
    </location>
</feature>
<feature type="modified residue" description="N6-acetyllysine" evidence="6">
    <location>
        <position position="185"/>
    </location>
</feature>
<feature type="disulfide bond" description="In disulfide HMGB1; alternate" evidence="3">
    <location>
        <begin position="23"/>
        <end position="45"/>
    </location>
</feature>
<feature type="cross-link" description="Isoglutamyl lysine isopeptide (Lys-Gln) (interchain with Q-?)" evidence="1">
    <location>
        <position position="28"/>
    </location>
</feature>
<feature type="cross-link" description="Isoglutamyl lysine isopeptide (Lys-Gln) (interchain with Q-?)" evidence="1">
    <location>
        <position position="43"/>
    </location>
</feature>
<feature type="cross-link" description="Isoglutamyl lysine isopeptide (Lys-Gln) (interchain with Q-?)" evidence="1">
    <location>
        <position position="44"/>
    </location>
</feature>
<feature type="cross-link" description="Isoglutamyl lysine isopeptide (Lys-Gln) (interchain with Q-?)" evidence="1">
    <location>
        <position position="68"/>
    </location>
</feature>
<feature type="cross-link" description="Isoglutamyl lysine isopeptide (Lys-Gln) (interchain with Q-?)" evidence="1">
    <location>
        <position position="180"/>
    </location>
</feature>
<feature type="cross-link" description="Isoglutamyl lysine isopeptide (Lys-Gln) (interchain with Q-?)" evidence="1">
    <location>
        <position position="182"/>
    </location>
</feature>
<feature type="cross-link" description="Isoglutamyl lysine isopeptide (Lys-Gln) (interchain with Q-?)" evidence="1">
    <location>
        <position position="183"/>
    </location>
</feature>
<feature type="cross-link" description="Isoglutamyl lysine isopeptide (Lys-Gln) (interchain with Q-?)" evidence="1">
    <location>
        <position position="184"/>
    </location>
</feature>
<feature type="sequence conflict" description="In Ref. 5; AA sequence." evidence="15" ref="5">
    <original>C</original>
    <variation>S</variation>
    <location>
        <position position="23"/>
    </location>
</feature>
<feature type="sequence conflict" description="In Ref. 5; AA sequence." evidence="15" ref="5">
    <original>C</original>
    <variation>A</variation>
    <location>
        <position position="106"/>
    </location>
</feature>
<feature type="sequence conflict" description="In Ref. 4; AAA30567." evidence="15" ref="4">
    <original>EHPGL</original>
    <variation>PGGGV</variation>
    <location>
        <begin position="116"/>
        <end position="120"/>
    </location>
</feature>
<feature type="sequence conflict" description="In Ref. 5; AA sequence." evidence="15" ref="5">
    <original>E</original>
    <variation>D</variation>
    <location>
        <position position="194"/>
    </location>
</feature>
<gene>
    <name type="primary">HMGB1</name>
    <name type="synonym">HMG1</name>
</gene>
<name>HMGB1_BOVIN</name>
<evidence type="ECO:0000250" key="1">
    <source>
        <dbReference type="UniProtKB" id="P09429"/>
    </source>
</evidence>
<evidence type="ECO:0000250" key="2">
    <source>
        <dbReference type="UniProtKB" id="P63158"/>
    </source>
</evidence>
<evidence type="ECO:0000250" key="3">
    <source>
        <dbReference type="UniProtKB" id="P63159"/>
    </source>
</evidence>
<evidence type="ECO:0000255" key="4">
    <source>
        <dbReference type="PROSITE-ProRule" id="PRU00267"/>
    </source>
</evidence>
<evidence type="ECO:0000256" key="5">
    <source>
        <dbReference type="SAM" id="MobiDB-lite"/>
    </source>
</evidence>
<evidence type="ECO:0000269" key="6">
    <source>
    </source>
</evidence>
<evidence type="ECO:0000269" key="7">
    <source>
    </source>
</evidence>
<evidence type="ECO:0000269" key="8">
    <source>
    </source>
</evidence>
<evidence type="ECO:0000269" key="9">
    <source>
    </source>
</evidence>
<evidence type="ECO:0000269" key="10">
    <source>
    </source>
</evidence>
<evidence type="ECO:0000269" key="11">
    <source>
    </source>
</evidence>
<evidence type="ECO:0000269" key="12">
    <source>
    </source>
</evidence>
<evidence type="ECO:0000269" key="13">
    <source>
    </source>
</evidence>
<evidence type="ECO:0000269" key="14">
    <source>
    </source>
</evidence>
<evidence type="ECO:0000305" key="15"/>
<evidence type="ECO:0000305" key="16">
    <source>
    </source>
</evidence>
<evidence type="ECO:0000305" key="17">
    <source>
    </source>
</evidence>
<evidence type="ECO:0000305" key="18">
    <source>
    </source>
</evidence>
<evidence type="ECO:0000305" key="19">
    <source>
    </source>
</evidence>
<reference key="1">
    <citation type="journal article" date="1988" name="Nucleic Acids Res.">
        <title>Full length cDNA sequence for bovine high mobility group 1 (HMG1) protein.</title>
        <authorList>
            <person name="Kaplan D.J."/>
            <person name="Duncan C.H."/>
        </authorList>
    </citation>
    <scope>NUCLEOTIDE SEQUENCE [MRNA]</scope>
    <source>
        <strain>Holstein</strain>
        <tissue>Fetal thymus</tissue>
    </source>
</reference>
<reference key="2">
    <citation type="journal article" date="2005" name="BMC Genomics">
        <title>Characterization of 954 bovine full-CDS cDNA sequences.</title>
        <authorList>
            <person name="Harhay G.P."/>
            <person name="Sonstegard T.S."/>
            <person name="Keele J.W."/>
            <person name="Heaton M.P."/>
            <person name="Clawson M.L."/>
            <person name="Snelling W.M."/>
            <person name="Wiedmann R.T."/>
            <person name="Van Tassell C.P."/>
            <person name="Smith T.P.L."/>
        </authorList>
    </citation>
    <scope>NUCLEOTIDE SEQUENCE [LARGE SCALE MRNA]</scope>
</reference>
<reference key="3">
    <citation type="submission" date="2005-08" db="EMBL/GenBank/DDBJ databases">
        <authorList>
            <consortium name="NIH - Mammalian Gene Collection (MGC) project"/>
        </authorList>
    </citation>
    <scope>NUCLEOTIDE SEQUENCE [LARGE SCALE MRNA]</scope>
    <source>
        <strain>Hereford</strain>
        <tissue>Thymus</tissue>
    </source>
</reference>
<reference key="4">
    <citation type="journal article" date="1984" name="Biosci. Rep.">
        <title>Isolation and partial sequence of bovine cDNA clones for the high-mobility-group protein (HMG-1).</title>
        <authorList>
            <person name="Pentecost B."/>
            <person name="Dixon G.H."/>
        </authorList>
    </citation>
    <scope>NUCLEOTIDE SEQUENCE [MRNA] OF 116-215</scope>
</reference>
<reference key="5">
    <citation type="journal article" date="1980" name="FEBS Lett.">
        <title>The primary structures of non-histone chromosomal proteins HMG 1 and 2.</title>
        <authorList>
            <person name="Walker J.M."/>
            <person name="Gooderham K."/>
            <person name="Hastings J.R."/>
            <person name="Mayes E."/>
            <person name="Johns E.W."/>
        </authorList>
    </citation>
    <scope>PROTEIN SEQUENCE OF 2-38; 46-157 AND 159-195</scope>
</reference>
<reference key="6">
    <citation type="journal article" date="1990" name="FEBS Lett.">
        <title>High mobility group proteins 1 and 2 bind preferentially to brominated poly(dG-dC).poly(dG-dC) in the Z-DNA conformation but not to other types of Z-DNA.</title>
        <authorList>
            <person name="Christen T."/>
            <person name="Bischoff M."/>
            <person name="Hobi R."/>
            <person name="Kuenzle C.C."/>
        </authorList>
    </citation>
    <scope>PROTEIN SEQUENCE OF 2-37</scope>
</reference>
<reference key="7">
    <citation type="journal article" date="1980" name="FEBS Lett.">
        <title>Clusters of nonhistone chromosomal protein HMG1 molecules in intact chromatin.</title>
        <authorList>
            <person name="Itkes A.V."/>
            <person name="Glotov B.O."/>
            <person name="Nikolaev L.G."/>
            <person name="Severin E.S."/>
        </authorList>
    </citation>
    <scope>SUBCELLULAR LOCATION</scope>
</reference>
<reference key="8">
    <citation type="journal article" date="2003" name="EMBO J.">
        <title>Monocytic cells hyperacetylate chromatin protein HMGB1 to redirect it towards secretion.</title>
        <authorList>
            <person name="Bonaldi T."/>
            <person name="Talamo F."/>
            <person name="Scaffidi P."/>
            <person name="Ferrera D."/>
            <person name="Porto A."/>
            <person name="Bachi A."/>
            <person name="Rubartelli A."/>
            <person name="Agresti A."/>
            <person name="Bianchi M.E."/>
        </authorList>
    </citation>
    <scope>ACETYLATION AT LYS-3; LYS-7; LYS-8; LYS-12; LYS-28; LYS-29; LYS-30; LYS-127; LYS-128; LYS-172; LYS-173; LYS-177; LYS-180; LYS-182; LYS-183; LYS-184 AND LYS-185</scope>
</reference>
<reference key="9">
    <citation type="journal article" date="2007" name="J. Leukoc. Biol.">
        <title>High mobility group box-1 protein induces the migration and activation of human dendritic cells and acts as an alarmin.</title>
        <authorList>
            <person name="Yang D."/>
            <person name="Chen Q."/>
            <person name="Yang H."/>
            <person name="Tracey K.J."/>
            <person name="Bustin M."/>
            <person name="Oppenheim J.J."/>
        </authorList>
    </citation>
    <scope>FUNCTION</scope>
</reference>
<reference key="10">
    <citation type="journal article" date="2007" name="Nat. Immunol.">
        <title>Toll-like receptor 9-dependent activation by DNA-containing immune complexes is mediated by HMGB1 and RAGE.</title>
        <authorList>
            <person name="Tian J."/>
            <person name="Avalos A.M."/>
            <person name="Mao S.Y."/>
            <person name="Chen B."/>
            <person name="Senthil K."/>
            <person name="Wu H."/>
            <person name="Parroche P."/>
            <person name="Drabic S."/>
            <person name="Golenbock D."/>
            <person name="Sirois C."/>
            <person name="Hua J."/>
            <person name="An L.L."/>
            <person name="Audoly L."/>
            <person name="La Rosa G."/>
            <person name="Bierhaus A."/>
            <person name="Naworth P."/>
            <person name="Marshak-Rothstein A."/>
            <person name="Crow M.K."/>
            <person name="Fitzgerald K.A."/>
            <person name="Latz E."/>
            <person name="Kiener P.A."/>
            <person name="Coyle A.J."/>
        </authorList>
    </citation>
    <scope>FUNCTION</scope>
    <scope>INTERACTION WITH AGER</scope>
</reference>
<reference key="11">
    <citation type="journal article" date="2010" name="Autoimmunity">
        <title>RAGE-independent autoreactive B cell activation in response to chromatin and HMGB1/DNA immune complexes.</title>
        <authorList>
            <person name="Avalos A.M."/>
            <person name="Kiefer K."/>
            <person name="Tian J."/>
            <person name="Christensen S."/>
            <person name="Shlomchik M."/>
            <person name="Coyle A.J."/>
            <person name="Marshak-Rothstein A."/>
        </authorList>
    </citation>
    <scope>FUNCTION</scope>
</reference>
<reference key="12">
    <citation type="journal article" date="2008" name="Arterioscler. Thromb. Vasc. Biol.">
        <title>Proteolytic cleavage of high mobility group box 1 protein by thrombin-thrombomodulin complexes.</title>
        <authorList>
            <person name="Ito T."/>
            <person name="Kawahara K."/>
            <person name="Okamoto K."/>
            <person name="Yamada S."/>
            <person name="Yasuda M."/>
            <person name="Imaizumi H."/>
            <person name="Nawa Y."/>
            <person name="Meng X."/>
            <person name="Shrestha B."/>
            <person name="Hashiguchi T."/>
            <person name="Maruyama I."/>
        </authorList>
    </citation>
    <scope>HEPARIN-BINDING</scope>
    <scope>CLEAVAGE BY THROMBIN:THROMBOMODULIN</scope>
</reference>
<reference key="13">
    <citation type="journal article" date="2012" name="Nucleic Acids Res.">
        <title>Nucleosome dynamics: HMGB1 relaxes canonical nucleosome structure to facilitate estrogen receptor binding.</title>
        <authorList>
            <person name="Joshi S.R."/>
            <person name="Sarpong Y.C."/>
            <person name="Peterson R.C."/>
            <person name="Scovell W.M."/>
        </authorList>
    </citation>
    <scope>FUNCTION</scope>
</reference>
<reference key="14">
    <citation type="journal article" date="2013" name="Front. Immunol.">
        <title>HMGB1: The central cytokine for all lymphoid cells.</title>
        <authorList>
            <person name="Li G."/>
            <person name="Liang X."/>
            <person name="Lotze M.T."/>
        </authorList>
    </citation>
    <scope>REVIEW ON FUNCTION RELATED TO ADAPTIVE IMMUNITY</scope>
</reference>
<reference key="15">
    <citation type="journal article" date="2013" name="J. Leukoc. Biol.">
        <title>The many faces of HMGB1: molecular structure-functional activity in inflammation, apoptosis, and chemotaxis.</title>
        <authorList>
            <person name="Yang H."/>
            <person name="Antoine D.J."/>
            <person name="Andersson U."/>
            <person name="Tracey K.J."/>
        </authorList>
    </citation>
    <scope>REVIEW ON FUNCTION RELATED TO INFLAMMATION</scope>
</reference>
<reference key="16">
    <citation type="journal article" date="2013" name="Semin. Cancer Biol.">
        <title>Menage a Trois in stress: DAMPs, redox and autophagy.</title>
        <authorList>
            <person name="Li G."/>
            <person name="Tang D."/>
            <person name="Lotze M.T."/>
        </authorList>
    </citation>
    <scope>REVIEW</scope>
</reference>
<reference key="17">
    <citation type="journal article" date="2014" name="Yonsei Med. J.">
        <title>The role of high mobility group box 1 in innate immunity.</title>
        <authorList>
            <person name="Lee S.A."/>
            <person name="Kwak M.S."/>
            <person name="Kim S."/>
            <person name="Shin J.S."/>
        </authorList>
    </citation>
    <scope>REVIEW ON FUNCTION RELATED TO INNATE IMMUNITY</scope>
</reference>
<sequence>MGKGDPKKPRGKMSSYAFFVQTCREEHKKKHPDASVNFSEFSKKCSERWKTMSAKEKGKFEDMAKADKARYEREMKTYIPPKGETKKKFKDPNAPKRPPSAFFLFCSEYRPKIKGEHPGLSIGDVAKKLGEMWNNTAADDKQPYEKKAAKLKEKYEKDIAAYRAKGKPDAAKKGVVKAEKSKKKKEEEEDEEDEEDEEEEEDEEDEEEEEDDDDE</sequence>
<protein>
    <recommendedName>
        <fullName>High mobility group protein B1</fullName>
    </recommendedName>
    <alternativeName>
        <fullName>High mobility group protein 1</fullName>
        <shortName>HMG-1</shortName>
    </alternativeName>
</protein>
<organism>
    <name type="scientific">Bos taurus</name>
    <name type="common">Bovine</name>
    <dbReference type="NCBI Taxonomy" id="9913"/>
    <lineage>
        <taxon>Eukaryota</taxon>
        <taxon>Metazoa</taxon>
        <taxon>Chordata</taxon>
        <taxon>Craniata</taxon>
        <taxon>Vertebrata</taxon>
        <taxon>Euteleostomi</taxon>
        <taxon>Mammalia</taxon>
        <taxon>Eutheria</taxon>
        <taxon>Laurasiatheria</taxon>
        <taxon>Artiodactyla</taxon>
        <taxon>Ruminantia</taxon>
        <taxon>Pecora</taxon>
        <taxon>Bovidae</taxon>
        <taxon>Bovinae</taxon>
        <taxon>Bos</taxon>
    </lineage>
</organism>
<accession>P10103</accession>
<accession>A5D9G8</accession>
<accession>Q3ZC39</accession>
<keyword id="KW-0007">Acetylation</keyword>
<keyword id="KW-1064">Adaptive immunity</keyword>
<keyword id="KW-0013">ADP-ribosylation</keyword>
<keyword id="KW-0072">Autophagy</keyword>
<keyword id="KW-1003">Cell membrane</keyword>
<keyword id="KW-0145">Chemotaxis</keyword>
<keyword id="KW-0158">Chromosome</keyword>
<keyword id="KW-0963">Cytoplasm</keyword>
<keyword id="KW-0903">Direct protein sequencing</keyword>
<keyword id="KW-1015">Disulfide bond</keyword>
<keyword id="KW-0227">DNA damage</keyword>
<keyword id="KW-0233">DNA recombination</keyword>
<keyword id="KW-0234">DNA repair</keyword>
<keyword id="KW-0238">DNA-binding</keyword>
<keyword id="KW-0967">Endosome</keyword>
<keyword id="KW-0391">Immunity</keyword>
<keyword id="KW-0395">Inflammatory response</keyword>
<keyword id="KW-0399">Innate immunity</keyword>
<keyword id="KW-1017">Isopeptide bond</keyword>
<keyword id="KW-0472">Membrane</keyword>
<keyword id="KW-0539">Nucleus</keyword>
<keyword id="KW-0558">Oxidation</keyword>
<keyword id="KW-0597">Phosphoprotein</keyword>
<keyword id="KW-1185">Reference proteome</keyword>
<keyword id="KW-0677">Repeat</keyword>
<keyword id="KW-0964">Secreted</keyword>
<dbReference type="EMBL" id="X12796">
    <property type="protein sequence ID" value="CAA31284.1"/>
    <property type="molecule type" value="mRNA"/>
</dbReference>
<dbReference type="EMBL" id="BT030587">
    <property type="protein sequence ID" value="ABQ13027.1"/>
    <property type="molecule type" value="mRNA"/>
</dbReference>
<dbReference type="EMBL" id="BC102929">
    <property type="protein sequence ID" value="AAI02930.1"/>
    <property type="molecule type" value="mRNA"/>
</dbReference>
<dbReference type="EMBL" id="M26110">
    <property type="protein sequence ID" value="AAA30567.1"/>
    <property type="molecule type" value="mRNA"/>
</dbReference>
<dbReference type="PIR" id="S01947">
    <property type="entry name" value="S01947"/>
</dbReference>
<dbReference type="RefSeq" id="NP_788785.1">
    <property type="nucleotide sequence ID" value="NM_176612.1"/>
</dbReference>
<dbReference type="RefSeq" id="XP_005213615.1">
    <property type="nucleotide sequence ID" value="XM_005213558.1"/>
</dbReference>
<dbReference type="RefSeq" id="XP_010808966.1">
    <property type="nucleotide sequence ID" value="XM_010810664.2"/>
</dbReference>
<dbReference type="RefSeq" id="XP_059747942.1">
    <property type="nucleotide sequence ID" value="XM_059891959.1"/>
</dbReference>
<dbReference type="RefSeq" id="XP_059747943.1">
    <property type="nucleotide sequence ID" value="XM_059891960.1"/>
</dbReference>
<dbReference type="RefSeq" id="XP_059747944.1">
    <property type="nucleotide sequence ID" value="XM_059891961.1"/>
</dbReference>
<dbReference type="RefSeq" id="XP_059747945.1">
    <property type="nucleotide sequence ID" value="XM_059891962.1"/>
</dbReference>
<dbReference type="RefSeq" id="XP_059747946.1">
    <property type="nucleotide sequence ID" value="XM_059891963.1"/>
</dbReference>
<dbReference type="RefSeq" id="XP_059747947.1">
    <property type="nucleotide sequence ID" value="XM_059891964.1"/>
</dbReference>
<dbReference type="RefSeq" id="XP_059747948.1">
    <property type="nucleotide sequence ID" value="XM_059891965.1"/>
</dbReference>
<dbReference type="RefSeq" id="XP_059747949.1">
    <property type="nucleotide sequence ID" value="XM_059891966.1"/>
</dbReference>
<dbReference type="RefSeq" id="XP_059747950.1">
    <property type="nucleotide sequence ID" value="XM_059891967.1"/>
</dbReference>
<dbReference type="SMR" id="P10103"/>
<dbReference type="CORUM" id="P10103"/>
<dbReference type="FunCoup" id="P10103">
    <property type="interactions" value="2423"/>
</dbReference>
<dbReference type="STRING" id="9913.ENSBTAP00000024094"/>
<dbReference type="iPTMnet" id="P10103"/>
<dbReference type="PaxDb" id="9913-ENSBTAP00000024094"/>
<dbReference type="PeptideAtlas" id="P10103"/>
<dbReference type="ABCD" id="P10103">
    <property type="antibodies" value="2 sequenced antibodies"/>
</dbReference>
<dbReference type="Ensembl" id="ENSBTAT00000024094.5">
    <property type="protein sequence ID" value="ENSBTAP00000024094.3"/>
    <property type="gene ID" value="ENSBTAG00000018103.5"/>
</dbReference>
<dbReference type="GeneID" id="282691"/>
<dbReference type="KEGG" id="bta:282691"/>
<dbReference type="CTD" id="3146"/>
<dbReference type="VEuPathDB" id="HostDB:ENSBTAG00000018103"/>
<dbReference type="VGNC" id="VGNC:53816">
    <property type="gene designation" value="HMGB1"/>
</dbReference>
<dbReference type="eggNOG" id="KOG0381">
    <property type="taxonomic scope" value="Eukaryota"/>
</dbReference>
<dbReference type="GeneTree" id="ENSGT00950000183120"/>
<dbReference type="HOGENOM" id="CLU_082854_0_0_1"/>
<dbReference type="InParanoid" id="P10103"/>
<dbReference type="OMA" id="PHSANEV"/>
<dbReference type="OrthoDB" id="1919336at2759"/>
<dbReference type="TreeFam" id="TF105371"/>
<dbReference type="Reactome" id="R-BTA-140342">
    <property type="pathway name" value="Apoptosis induced DNA fragmentation"/>
</dbReference>
<dbReference type="Reactome" id="R-BTA-445989">
    <property type="pathway name" value="TAK1-dependent IKK and NF-kappa-B activation"/>
</dbReference>
<dbReference type="Reactome" id="R-BTA-5620971">
    <property type="pathway name" value="Pyroptosis"/>
</dbReference>
<dbReference type="Reactome" id="R-BTA-5686938">
    <property type="pathway name" value="Regulation of TLR by endogenous ligand"/>
</dbReference>
<dbReference type="Reactome" id="R-BTA-6798695">
    <property type="pathway name" value="Neutrophil degranulation"/>
</dbReference>
<dbReference type="Reactome" id="R-BTA-879415">
    <property type="pathway name" value="Advanced glycosylation endproduct receptor signaling"/>
</dbReference>
<dbReference type="Reactome" id="R-BTA-933542">
    <property type="pathway name" value="TRAF6 mediated NF-kB activation"/>
</dbReference>
<dbReference type="Proteomes" id="UP000009136">
    <property type="component" value="Chromosome 12"/>
</dbReference>
<dbReference type="Bgee" id="ENSBTAG00000018103">
    <property type="expression patterns" value="Expressed in pharyngeal tonsil and 106 other cell types or tissues"/>
</dbReference>
<dbReference type="GO" id="GO:0000785">
    <property type="term" value="C:chromatin"/>
    <property type="evidence" value="ECO:0000250"/>
    <property type="project" value="AgBase"/>
</dbReference>
<dbReference type="GO" id="GO:0000793">
    <property type="term" value="C:condensed chromosome"/>
    <property type="evidence" value="ECO:0000250"/>
    <property type="project" value="AgBase"/>
</dbReference>
<dbReference type="GO" id="GO:0005793">
    <property type="term" value="C:endoplasmic reticulum-Golgi intermediate compartment"/>
    <property type="evidence" value="ECO:0007669"/>
    <property type="project" value="UniProtKB-SubCell"/>
</dbReference>
<dbReference type="GO" id="GO:0005768">
    <property type="term" value="C:endosome"/>
    <property type="evidence" value="ECO:0007669"/>
    <property type="project" value="UniProtKB-SubCell"/>
</dbReference>
<dbReference type="GO" id="GO:0005576">
    <property type="term" value="C:extracellular region"/>
    <property type="evidence" value="ECO:0007669"/>
    <property type="project" value="UniProtKB-SubCell"/>
</dbReference>
<dbReference type="GO" id="GO:0005634">
    <property type="term" value="C:nucleus"/>
    <property type="evidence" value="ECO:0007669"/>
    <property type="project" value="UniProtKB-SubCell"/>
</dbReference>
<dbReference type="GO" id="GO:0005886">
    <property type="term" value="C:plasma membrane"/>
    <property type="evidence" value="ECO:0007669"/>
    <property type="project" value="UniProtKB-SubCell"/>
</dbReference>
<dbReference type="GO" id="GO:0000405">
    <property type="term" value="F:bubble DNA binding"/>
    <property type="evidence" value="ECO:0000250"/>
    <property type="project" value="AgBase"/>
</dbReference>
<dbReference type="GO" id="GO:0042056">
    <property type="term" value="F:chemoattractant activity"/>
    <property type="evidence" value="ECO:0000314"/>
    <property type="project" value="UniProtKB"/>
</dbReference>
<dbReference type="GO" id="GO:0003684">
    <property type="term" value="F:damaged DNA binding"/>
    <property type="evidence" value="ECO:0000314"/>
    <property type="project" value="UniProtKB"/>
</dbReference>
<dbReference type="GO" id="GO:0008301">
    <property type="term" value="F:DNA binding, bending"/>
    <property type="evidence" value="ECO:0000314"/>
    <property type="project" value="UniProtKB"/>
</dbReference>
<dbReference type="GO" id="GO:0003690">
    <property type="term" value="F:double-stranded DNA binding"/>
    <property type="evidence" value="ECO:0000314"/>
    <property type="project" value="UniProtKB"/>
</dbReference>
<dbReference type="GO" id="GO:0000400">
    <property type="term" value="F:four-way junction DNA binding"/>
    <property type="evidence" value="ECO:0000250"/>
    <property type="project" value="AgBase"/>
</dbReference>
<dbReference type="GO" id="GO:0042393">
    <property type="term" value="F:histone binding"/>
    <property type="evidence" value="ECO:0000314"/>
    <property type="project" value="UniProtKB"/>
</dbReference>
<dbReference type="GO" id="GO:0044378">
    <property type="term" value="F:non-sequence-specific DNA binding, bending"/>
    <property type="evidence" value="ECO:0000250"/>
    <property type="project" value="AgBase"/>
</dbReference>
<dbReference type="GO" id="GO:0050786">
    <property type="term" value="F:RAGE receptor binding"/>
    <property type="evidence" value="ECO:0000314"/>
    <property type="project" value="UniProtKB"/>
</dbReference>
<dbReference type="GO" id="GO:0003697">
    <property type="term" value="F:single-stranded DNA binding"/>
    <property type="evidence" value="ECO:0000314"/>
    <property type="project" value="UniProtKB"/>
</dbReference>
<dbReference type="GO" id="GO:0097100">
    <property type="term" value="F:supercoiled DNA binding"/>
    <property type="evidence" value="ECO:0000250"/>
    <property type="project" value="AgBase"/>
</dbReference>
<dbReference type="GO" id="GO:0045322">
    <property type="term" value="F:unmethylated CpG binding"/>
    <property type="evidence" value="ECO:0000314"/>
    <property type="project" value="UniProtKB"/>
</dbReference>
<dbReference type="GO" id="GO:0002250">
    <property type="term" value="P:adaptive immune response"/>
    <property type="evidence" value="ECO:0007669"/>
    <property type="project" value="UniProtKB-KW"/>
</dbReference>
<dbReference type="GO" id="GO:0043277">
    <property type="term" value="P:apoptotic cell clearance"/>
    <property type="evidence" value="ECO:0000250"/>
    <property type="project" value="UniProtKB"/>
</dbReference>
<dbReference type="GO" id="GO:0006914">
    <property type="term" value="P:autophagy"/>
    <property type="evidence" value="ECO:0007669"/>
    <property type="project" value="UniProtKB-KW"/>
</dbReference>
<dbReference type="GO" id="GO:0002322">
    <property type="term" value="P:B cell proliferation involved in immune response"/>
    <property type="evidence" value="ECO:0000314"/>
    <property type="project" value="UniProtKB"/>
</dbReference>
<dbReference type="GO" id="GO:0006338">
    <property type="term" value="P:chromatin remodeling"/>
    <property type="evidence" value="ECO:0000303"/>
    <property type="project" value="UniProtKB"/>
</dbReference>
<dbReference type="GO" id="GO:0002407">
    <property type="term" value="P:dendritic cell chemotaxis"/>
    <property type="evidence" value="ECO:0000314"/>
    <property type="project" value="UniProtKB"/>
</dbReference>
<dbReference type="GO" id="GO:0032392">
    <property type="term" value="P:DNA geometric change"/>
    <property type="evidence" value="ECO:0000250"/>
    <property type="project" value="AgBase"/>
</dbReference>
<dbReference type="GO" id="GO:0006310">
    <property type="term" value="P:DNA recombination"/>
    <property type="evidence" value="ECO:0000314"/>
    <property type="project" value="UniProtKB"/>
</dbReference>
<dbReference type="GO" id="GO:0006265">
    <property type="term" value="P:DNA topological change"/>
    <property type="evidence" value="ECO:0000314"/>
    <property type="project" value="UniProtKB"/>
</dbReference>
<dbReference type="GO" id="GO:0006302">
    <property type="term" value="P:double-strand break repair"/>
    <property type="evidence" value="ECO:0000250"/>
    <property type="project" value="UniProtKB"/>
</dbReference>
<dbReference type="GO" id="GO:0006954">
    <property type="term" value="P:inflammatory response"/>
    <property type="evidence" value="ECO:0007669"/>
    <property type="project" value="UniProtKB-KW"/>
</dbReference>
<dbReference type="GO" id="GO:0045087">
    <property type="term" value="P:innate immune response"/>
    <property type="evidence" value="ECO:0007669"/>
    <property type="project" value="UniProtKB-KW"/>
</dbReference>
<dbReference type="GO" id="GO:0001773">
    <property type="term" value="P:myeloid dendritic cell activation"/>
    <property type="evidence" value="ECO:0000314"/>
    <property type="project" value="UniProtKB"/>
</dbReference>
<dbReference type="GO" id="GO:0017055">
    <property type="term" value="P:negative regulation of RNA polymerase II transcription preinitiation complex assembly"/>
    <property type="evidence" value="ECO:0000250"/>
    <property type="project" value="AgBase"/>
</dbReference>
<dbReference type="GO" id="GO:0000122">
    <property type="term" value="P:negative regulation of transcription by RNA polymerase II"/>
    <property type="evidence" value="ECO:0000250"/>
    <property type="project" value="AgBase"/>
</dbReference>
<dbReference type="GO" id="GO:0097350">
    <property type="term" value="P:neutrophil clearance"/>
    <property type="evidence" value="ECO:0000250"/>
    <property type="project" value="UniProtKB"/>
</dbReference>
<dbReference type="GO" id="GO:0006334">
    <property type="term" value="P:nucleosome assembly"/>
    <property type="evidence" value="ECO:0000250"/>
    <property type="project" value="AgBase"/>
</dbReference>
<dbReference type="GO" id="GO:0002270">
    <property type="term" value="P:plasmacytoid dendritic cell activation"/>
    <property type="evidence" value="ECO:0000314"/>
    <property type="project" value="UniProtKB"/>
</dbReference>
<dbReference type="GO" id="GO:0032727">
    <property type="term" value="P:positive regulation of interferon-alpha production"/>
    <property type="evidence" value="ECO:0000314"/>
    <property type="project" value="UniProtKB"/>
</dbReference>
<dbReference type="GO" id="GO:0034165">
    <property type="term" value="P:positive regulation of toll-like receptor 9 signaling pathway"/>
    <property type="evidence" value="ECO:0000315"/>
    <property type="project" value="UniProtKB"/>
</dbReference>
<dbReference type="GO" id="GO:0032760">
    <property type="term" value="P:positive regulation of tumor necrosis factor production"/>
    <property type="evidence" value="ECO:0000314"/>
    <property type="project" value="UniProtKB"/>
</dbReference>
<dbReference type="GO" id="GO:0002840">
    <property type="term" value="P:regulation of T cell mediated immune response to tumor cell"/>
    <property type="evidence" value="ECO:0000250"/>
    <property type="project" value="UniProtKB"/>
</dbReference>
<dbReference type="GO" id="GO:0006357">
    <property type="term" value="P:regulation of transcription by RNA polymerase II"/>
    <property type="evidence" value="ECO:0000318"/>
    <property type="project" value="GO_Central"/>
</dbReference>
<dbReference type="GO" id="GO:0034162">
    <property type="term" value="P:toll-like receptor 9 signaling pathway"/>
    <property type="evidence" value="ECO:0000314"/>
    <property type="project" value="UniProtKB"/>
</dbReference>
<dbReference type="GO" id="GO:0033151">
    <property type="term" value="P:V(D)J recombination"/>
    <property type="evidence" value="ECO:0000314"/>
    <property type="project" value="UniProtKB"/>
</dbReference>
<dbReference type="CDD" id="cd21978">
    <property type="entry name" value="HMG-box_HMGB_rpt1"/>
    <property type="match status" value="1"/>
</dbReference>
<dbReference type="CDD" id="cd21979">
    <property type="entry name" value="HMG-box_HMGB_rpt2"/>
    <property type="match status" value="1"/>
</dbReference>
<dbReference type="FunFam" id="1.10.30.10:FF:000006">
    <property type="entry name" value="High mobility group protein B1"/>
    <property type="match status" value="1"/>
</dbReference>
<dbReference type="FunFam" id="1.10.30.10:FF:000015">
    <property type="entry name" value="high mobility group protein B1"/>
    <property type="match status" value="1"/>
</dbReference>
<dbReference type="Gene3D" id="1.10.30.10">
    <property type="entry name" value="High mobility group box domain"/>
    <property type="match status" value="2"/>
</dbReference>
<dbReference type="InterPro" id="IPR009071">
    <property type="entry name" value="HMG_box_dom"/>
</dbReference>
<dbReference type="InterPro" id="IPR036910">
    <property type="entry name" value="HMG_box_dom_sf"/>
</dbReference>
<dbReference type="InterPro" id="IPR017967">
    <property type="entry name" value="HMG_boxA_CS"/>
</dbReference>
<dbReference type="InterPro" id="IPR050342">
    <property type="entry name" value="HMGB"/>
</dbReference>
<dbReference type="PANTHER" id="PTHR48112:SF12">
    <property type="entry name" value="HIGH MOBILITY GROUP PROTEIN B1-LIKE 1-RELATED"/>
    <property type="match status" value="1"/>
</dbReference>
<dbReference type="PANTHER" id="PTHR48112">
    <property type="entry name" value="HIGH MOBILITY GROUP PROTEIN DSP1"/>
    <property type="match status" value="1"/>
</dbReference>
<dbReference type="Pfam" id="PF00505">
    <property type="entry name" value="HMG_box"/>
    <property type="match status" value="1"/>
</dbReference>
<dbReference type="Pfam" id="PF09011">
    <property type="entry name" value="HMG_box_2"/>
    <property type="match status" value="1"/>
</dbReference>
<dbReference type="PRINTS" id="PR00886">
    <property type="entry name" value="HIGHMOBLTY12"/>
</dbReference>
<dbReference type="SMART" id="SM00398">
    <property type="entry name" value="HMG"/>
    <property type="match status" value="2"/>
</dbReference>
<dbReference type="SUPFAM" id="SSF47095">
    <property type="entry name" value="HMG-box"/>
    <property type="match status" value="2"/>
</dbReference>
<dbReference type="PROSITE" id="PS00353">
    <property type="entry name" value="HMG_BOX_1"/>
    <property type="match status" value="1"/>
</dbReference>
<dbReference type="PROSITE" id="PS50118">
    <property type="entry name" value="HMG_BOX_2"/>
    <property type="match status" value="2"/>
</dbReference>
<proteinExistence type="evidence at protein level"/>
<comment type="function">
    <text evidence="1 2 3 16 17 18 19">Multifunctional redox sensitive protein with various roles in different cellular compartments. In the nucleus is one of the major chromatin-associated non-histone proteins and acts as a DNA chaperone involved in replication, transcription, chromatin remodeling, V(D)J recombination, DNA repair and genome stability. Proposed to be an universal biosensor for nucleic acids. Promotes host inflammatory response to sterile and infectious signals and is involved in the coordination and integration of innate and adaptive immune responses. In the cytoplasm functions as a sensor and/or chaperone for immunogenic nucleic acids implicating the activation of TLR9-mediated immune responses, and mediates autophagy. Acts as a danger-associated molecular pattern (DAMP) molecule that amplifies immune responses during tissue injury. Released to the extracellular environment can bind DNA, nucleosomes, IL-1 beta, CXCL12, AGER isoform 2/sRAGE, lipopolysaccharide (LPS) and lipoteichoic acid (LTA), and activates cells through engagement of multiple surface receptors. In the extracellular compartment fully reduced HMGB1 (released by necrosis) acts as a chemokine, disulfide HMGB1 (actively secreted) as a cytokine, and sulfonyl HMGB1 (released from apoptotic cells) promotes immunological tolerance (PubMed:23446148, PubMed:23519706, PubMed:23994764, PubMed:25048472). Has proangiogenic activity. May be involved in platelet activation. Binds to phosphatidylserine and phosphatidylethanolamide. Bound to RAGE mediates signaling for neuronal outgrowth. May play a role in accumulation of expanded polyglutamine (polyQ) proteins (By similarity).</text>
</comment>
<comment type="function">
    <text evidence="1 2 3 11">Nuclear functions are attributed to fully reduced HGMB1. Associates with chromatin and binds DNA with a preference to non-canonical DNA structures such as single-stranded DNA, DNA-containing cruciforms or bent structures, supercoiled DNA and ZDNA. Can bent DNA and enhance DNA flexibility by looping thus providing a mechanism to promote activities on various gene promoters by enhancing transcription factor binding and/or bringing distant regulatory sequences into close proximity. May be involved in nucleotide excision repair (NER), mismatch repair (MMR) and base excision repair (BER) pathways, and double strand break repair such as non-homologous end joining (NHEJ). Involved in V(D)J recombination by acting as a cofactor of the RAG complex: acts by stimulating cleavage and RAG protein binding at the 23 bp spacer of conserved recombination signal sequences (RSS) (By similarity). In vitro can displace histone H1 from highly bent DNA. Can restructure the canonical nucleosome leading to relaxation of structural constraints for transcription factor-binding (PubMed:22941653). Enhances binding of sterol regulatory element-binding proteins (SREBPs) such as SREBF1 to their cognate DNA sequences and increases their transcriptional activities. Facilitates binding of TP53 to DNA. May be involved in mitochondrial quality control and autophagy in a transcription-dependent fashion implicating HSPB1. Can modulate the activity of the telomerase complex and may be involved in telomere maintenance (By similarity).</text>
</comment>
<comment type="function">
    <text evidence="1 2">In the cytoplasm proposed to dissociate the BECN1:BCL2 complex via competitive interaction with BECN1 leading to autophagy activation. Involved in oxidative stress-mediated autophagy. Can protect BECN1 and ATG5 from calpain-mediated cleavage and thus proposed to control their proautophagic and proapoptotic functions and to regulate the extent and severity of inflammation-associated cellular injury. In myeloid cells has a protective role against endotoxemia and bacterial infection by promoting autophagy. Involved in endosomal translocation and activation of TLR9 in response to CpG-DNA in macrophages (By similarity).</text>
</comment>
<comment type="function">
    <text evidence="1 2 3 7 8 10">In the extracellular compartment (following either active secretion or passive release)involved in regulation of the inflammatory response. Fully reduced HGMB1 (which subsequently gets oxidized after release) in association with CXCL12 mediates the recruitment of inflammatory cells during the initial phase of tissue injury; the CXCL12:HMGB1 complex triggers CXCR4 homodimerization (By similarity). Induces the migration of monocyte-derived immature dendritic cells and seems to regulate adhesive and migratory functions of neutrophils implicating AGER/RAGE and ITGAM (PubMed:16966386). Can bind to various types of DNA and RNA including microbial unmethylated CpG-DNA to enhance the innate immune response to nucleic acids. Proposed to act in promiscuous DNA/RNA sensing which cooperates with subsequent discriminative sensing by specific pattern recognition receptors. Promotes extracellular DNA-induced AIM2 inflammasome activation implicating AGER/RAGE (By similarity). Disulfide HMGB1 binds to transmembrane receptors, such as AGER/RAGE, TLR2, TLR4 and probably TREM1, thus activating their signal transduction pathways (PubMed:17417641). Mediates the release of cytokines/chemokines such as TNF, IL-1, IL-6, IL-8, CCL2, CCL3, CCL4 and CXCL10. Promotes secretion of interferon-gamma by macrophage-stimulated natural killer (NK) cells in concert with other cytokines like IL-2 or IL-12. TLR4 is proposed to be the primary receptor promoting macrophage activation and signaling through TLR4 seems to implicate LY96/MD-2. In bacterial LPS- or LTA-mediated inflammatory responses binds to the endotoxins and transfers them to CD14 for signaling to the respective TLR4:LY96 and TLR2 complexes. Contributes to tumor proliferation by association with ACER/RAGE. Can bind to IL1-beta and signals through the IL1R1:IL1RAP receptor complex (By similarity). Binding to class A CpG activates cytokine production in plasmacytoid dendritic cells implicating TLR9, MYD88 and AGER/RAGE and can activate autoreactive B cells (PubMed:17417641). Via HMGB1-containing chromatin immune complexes may also promote B cell responses to endogenous TLR9 ligands through a B-cell receptor (BCR)-dependent and ACER/RAGE-independent mechanism (PubMed:20014975). Inhibits phagocytosis of apoptotic cells by macrophages; the function is dependent on poly-ADP-ribosylation and involves binding to phosphatidylserine on the cell surface of apoptotic cells. In adaptive immunity may be involved in enhancing immunity through activation of effector T-cells and suppression of regulatory T (TReg) cells. In contrast, without implicating effector or regulatory T-cells, required for tumor infiltration and activation of T-cells expressing the lymphotoxin LTA:LTB heterotrimer thus promoting tumor malignant progression. Also reported to limit proliferation of T-cells. Released HMGB1:nucleosome complexes formed during apoptosis can signal through TLR2 to induce cytokine production. Involved in induction of immunological tolerance by apoptotic cells; its pro-inflammatory activities when released by apoptotic cells are neutralized by reactive oxygen species (ROS)-dependent oxidation specifically on Cys-106. During macrophage activation by activated lymphocyte-derived self apoptotic DNA (ALD-DNA) promotes recruitment of ALD-DNA to endosomes (By similarity).</text>
</comment>
<comment type="subunit">
    <text evidence="1 2 3">Interacts (fully reduced HMGB1) with CXCL12; probably in a 1:2 ratio involving two molecules of CXCL12, each interacting with one HMG box of HMGB1; inhibited by glycyrrhizin. Associates with the TLR4:LY96 receptor complex. Component of the RAG complex composed of core components RAG1 and RAG2, and associated component HMGB1 or HMGB2. Interacts (in cytoplasm upon starvation) with BECN1; inhibits the interaction of BECN1 and BCL2 leading to promotion of autophagy. Interacts with KPNA1; involved in nuclear import (By similarity). Interacts with AGER (PubMed:17417641). Interacts with SREBF1, TLR2, TLR4, TLR9, PTPRZ1, APEX1, FEN1, POLB, TERT. Interacts with IL1B, MSH2, XPA, XPC, HNF1A, TP53. Interacts with CD24; the probable CD24:SIGLEC10 complex is proposed to inhibit HGMB1-mediated tissue damage immune response. Interacts with THBD; prevents HGMB1 interaction with ACER/RAGE and inhibits HGMB1 pro-inflammatory activity. Interacts with HAVCR2; impairs HMGB1 binding to B-DNA and likely HMGB1-mediated innate immune response. Interacts with XPO1; mediating nuclear export (By similarity). Interacts with receptor RAGE/AGER (By similarity).</text>
</comment>
<comment type="subcellular location">
    <subcellularLocation>
        <location evidence="14">Nucleus</location>
    </subcellularLocation>
    <subcellularLocation>
        <location evidence="14">Chromosome</location>
    </subcellularLocation>
    <subcellularLocation>
        <location evidence="1">Cytoplasm</location>
    </subcellularLocation>
    <subcellularLocation>
        <location evidence="1 2">Secreted</location>
    </subcellularLocation>
    <subcellularLocation>
        <location evidence="1 2 3">Cell membrane</location>
        <topology evidence="1 2 3">Peripheral membrane protein</topology>
        <orientation evidence="1 2 3">Extracellular side</orientation>
    </subcellularLocation>
    <subcellularLocation>
        <location evidence="2">Endosome</location>
    </subcellularLocation>
    <subcellularLocation>
        <location evidence="2">Endoplasmic reticulum-Golgi intermediate compartment</location>
    </subcellularLocation>
    <text evidence="1 2">In basal state predominantly nuclear. Shuttles between the cytoplasm and the nucleus. Translocates from the nucleus to the cytoplasm upon autophagy stimulation. Release from macrophages in the extracellular milieu requires the activation of NLRC4 or NLRP3 inflammasomes (By similarity). Passively released to the extracellular milieu from necrotic cells by diffusion, involving the fully reduced HGMB1 which subsequently gets oxidized. Also released from apoptotic cells. Active secretion from a variety of immune and non-immune cells such as macrophages, monocytes, neutrophils, dendritic cells, natural killer cells and plasma cells in response to various stimuli such as LPS and cytokines involves a nonconventional secretory process via secretory lysosomes. Found on the surface of activated platelets.</text>
</comment>
<comment type="domain">
    <text evidence="1">HMG box 2 mediates pro-inflammatory cytokine-stimulating activity and binding to TLR4. However, not involved in mediating immunogenic activity in the context of apoptosis-induced immune tolerance.</text>
</comment>
<comment type="domain">
    <text evidence="1 3">The acidic C-terminal domain forms a flexible structure which can reversibly interact intramolecularily with the HMG boxes and modulate binding to DNA and other proteins.</text>
</comment>
<comment type="PTM">
    <text evidence="1">Phosphorylated at serine residues. Phosphorylation in both NLS regions is required for cytoplasmic translocation followed by secretion.</text>
</comment>
<comment type="PTM">
    <text evidence="3 6">Acetylated on multiple sites upon stimulation with LPS. Acetylation on lysine residues in the nuclear localization signals (NLS 1 and NLS 2) leads to cytoplasmic localization and subsequent secretion (PubMed:14532127). Acetylation on Lys-3 results in preferential binding to DNA ends and impairs DNA bending activity (By similarity).</text>
</comment>
<comment type="PTM">
    <text evidence="1">Reduction/oxidation of cysteine residues Cys-23, Cys-45 and Cys-106 and a possible intramolecular disulfide bond involving Cys-23 and Cys-45 give rise to different redox forms with specific functional activities in various cellular compartments: 1- fully reduced HMGB1 (HMGB1C23hC45hC106h), 2- disulfide HMGB1 (HMGB1C23-C45C106h) and 3- sulfonyl HMGB1 (HMGB1C23soC45soC106so).</text>
</comment>
<comment type="PTM">
    <text evidence="2">Poly-ADP-ribosylated by PARP1 when secreted following stimulation with LPS.</text>
</comment>
<comment type="PTM">
    <text evidence="1 9">In vitro cleavage by CASP1 is liberating a HMG box 1-containing peptide which may mediate immunogenic activity; the peptide antagonizes apoptosis-induced immune tolerance (By similarity). Can be proteolytically cleaved by a thrombin:thrombomodulin complex; reduces binding to heparin and pro-inflammatory activities.</text>
</comment>
<comment type="PTM">
    <text evidence="1">Forms covalent cross-links mediated by transglutaminase TGM2, between a glutamine and the epsilon-amino group of a lysine residue, forming homopolymers and heteropolymers.</text>
</comment>
<comment type="similarity">
    <text evidence="15">Belongs to the HMGB family.</text>
</comment>